<reference key="1">
    <citation type="journal article" date="2007" name="ISME J.">
        <title>Population level functional diversity in a microbial community revealed by comparative genomic and metagenomic analyses.</title>
        <authorList>
            <person name="Bhaya D."/>
            <person name="Grossman A.R."/>
            <person name="Steunou A.-S."/>
            <person name="Khuri N."/>
            <person name="Cohan F.M."/>
            <person name="Hamamura N."/>
            <person name="Melendrez M.C."/>
            <person name="Bateson M.M."/>
            <person name="Ward D.M."/>
            <person name="Heidelberg J.F."/>
        </authorList>
    </citation>
    <scope>NUCLEOTIDE SEQUENCE [LARGE SCALE GENOMIC DNA]</scope>
    <source>
        <strain>JA-3-3Ab</strain>
    </source>
</reference>
<comment type="function">
    <text evidence="1">Catalyzes the NADPH-dependent reduction of L-glutamate 5-phosphate into L-glutamate 5-semialdehyde and phosphate. The product spontaneously undergoes cyclization to form 1-pyrroline-5-carboxylate.</text>
</comment>
<comment type="catalytic activity">
    <reaction evidence="1">
        <text>L-glutamate 5-semialdehyde + phosphate + NADP(+) = L-glutamyl 5-phosphate + NADPH + H(+)</text>
        <dbReference type="Rhea" id="RHEA:19541"/>
        <dbReference type="ChEBI" id="CHEBI:15378"/>
        <dbReference type="ChEBI" id="CHEBI:43474"/>
        <dbReference type="ChEBI" id="CHEBI:57783"/>
        <dbReference type="ChEBI" id="CHEBI:58066"/>
        <dbReference type="ChEBI" id="CHEBI:58274"/>
        <dbReference type="ChEBI" id="CHEBI:58349"/>
        <dbReference type="EC" id="1.2.1.41"/>
    </reaction>
</comment>
<comment type="pathway">
    <text evidence="1">Amino-acid biosynthesis; L-proline biosynthesis; L-glutamate 5-semialdehyde from L-glutamate: step 2/2.</text>
</comment>
<comment type="subcellular location">
    <subcellularLocation>
        <location evidence="1">Cytoplasm</location>
    </subcellularLocation>
</comment>
<comment type="similarity">
    <text evidence="1">Belongs to the gamma-glutamyl phosphate reductase family.</text>
</comment>
<name>PROA_SYNJA</name>
<gene>
    <name evidence="1" type="primary">proA</name>
    <name type="ordered locus">CYA_2820</name>
</gene>
<keyword id="KW-0028">Amino-acid biosynthesis</keyword>
<keyword id="KW-0963">Cytoplasm</keyword>
<keyword id="KW-0521">NADP</keyword>
<keyword id="KW-0560">Oxidoreductase</keyword>
<keyword id="KW-0641">Proline biosynthesis</keyword>
<feature type="chain" id="PRO_0000252601" description="Gamma-glutamyl phosphate reductase">
    <location>
        <begin position="1"/>
        <end position="455"/>
    </location>
</feature>
<evidence type="ECO:0000255" key="1">
    <source>
        <dbReference type="HAMAP-Rule" id="MF_00412"/>
    </source>
</evidence>
<accession>Q2JQB4</accession>
<proteinExistence type="inferred from homology"/>
<protein>
    <recommendedName>
        <fullName evidence="1">Gamma-glutamyl phosphate reductase</fullName>
        <shortName evidence="1">GPR</shortName>
        <ecNumber evidence="1">1.2.1.41</ecNumber>
    </recommendedName>
    <alternativeName>
        <fullName evidence="1">Glutamate-5-semialdehyde dehydrogenase</fullName>
    </alternativeName>
    <alternativeName>
        <fullName evidence="1">Glutamyl-gamma-semialdehyde dehydrogenase</fullName>
        <shortName evidence="1">GSA dehydrogenase</shortName>
    </alternativeName>
</protein>
<dbReference type="EC" id="1.2.1.41" evidence="1"/>
<dbReference type="EMBL" id="CP000239">
    <property type="protein sequence ID" value="ABD00922.1"/>
    <property type="molecule type" value="Genomic_DNA"/>
</dbReference>
<dbReference type="RefSeq" id="WP_011431592.1">
    <property type="nucleotide sequence ID" value="NC_007775.1"/>
</dbReference>
<dbReference type="SMR" id="Q2JQB4"/>
<dbReference type="STRING" id="321327.CYA_2820"/>
<dbReference type="KEGG" id="cya:CYA_2820"/>
<dbReference type="eggNOG" id="COG0014">
    <property type="taxonomic scope" value="Bacteria"/>
</dbReference>
<dbReference type="HOGENOM" id="CLU_030231_0_1_3"/>
<dbReference type="OrthoDB" id="9809970at2"/>
<dbReference type="UniPathway" id="UPA00098">
    <property type="reaction ID" value="UER00360"/>
</dbReference>
<dbReference type="Proteomes" id="UP000008818">
    <property type="component" value="Chromosome"/>
</dbReference>
<dbReference type="GO" id="GO:0005737">
    <property type="term" value="C:cytoplasm"/>
    <property type="evidence" value="ECO:0007669"/>
    <property type="project" value="UniProtKB-SubCell"/>
</dbReference>
<dbReference type="GO" id="GO:0004350">
    <property type="term" value="F:glutamate-5-semialdehyde dehydrogenase activity"/>
    <property type="evidence" value="ECO:0007669"/>
    <property type="project" value="UniProtKB-UniRule"/>
</dbReference>
<dbReference type="GO" id="GO:0050661">
    <property type="term" value="F:NADP binding"/>
    <property type="evidence" value="ECO:0007669"/>
    <property type="project" value="InterPro"/>
</dbReference>
<dbReference type="GO" id="GO:0055129">
    <property type="term" value="P:L-proline biosynthetic process"/>
    <property type="evidence" value="ECO:0007669"/>
    <property type="project" value="UniProtKB-UniRule"/>
</dbReference>
<dbReference type="CDD" id="cd07079">
    <property type="entry name" value="ALDH_F18-19_ProA-GPR"/>
    <property type="match status" value="1"/>
</dbReference>
<dbReference type="FunFam" id="3.40.309.10:FF:000006">
    <property type="entry name" value="Gamma-glutamyl phosphate reductase"/>
    <property type="match status" value="1"/>
</dbReference>
<dbReference type="Gene3D" id="3.40.605.10">
    <property type="entry name" value="Aldehyde Dehydrogenase, Chain A, domain 1"/>
    <property type="match status" value="1"/>
</dbReference>
<dbReference type="Gene3D" id="3.40.309.10">
    <property type="entry name" value="Aldehyde Dehydrogenase, Chain A, domain 2"/>
    <property type="match status" value="1"/>
</dbReference>
<dbReference type="HAMAP" id="MF_00412">
    <property type="entry name" value="ProA"/>
    <property type="match status" value="1"/>
</dbReference>
<dbReference type="InterPro" id="IPR016161">
    <property type="entry name" value="Ald_DH/histidinol_DH"/>
</dbReference>
<dbReference type="InterPro" id="IPR016163">
    <property type="entry name" value="Ald_DH_C"/>
</dbReference>
<dbReference type="InterPro" id="IPR016162">
    <property type="entry name" value="Ald_DH_N"/>
</dbReference>
<dbReference type="InterPro" id="IPR015590">
    <property type="entry name" value="Aldehyde_DH_dom"/>
</dbReference>
<dbReference type="InterPro" id="IPR020593">
    <property type="entry name" value="G-glutamylP_reductase_CS"/>
</dbReference>
<dbReference type="InterPro" id="IPR012134">
    <property type="entry name" value="Glu-5-SA_DH"/>
</dbReference>
<dbReference type="InterPro" id="IPR000965">
    <property type="entry name" value="GPR_dom"/>
</dbReference>
<dbReference type="NCBIfam" id="NF001221">
    <property type="entry name" value="PRK00197.1"/>
    <property type="match status" value="1"/>
</dbReference>
<dbReference type="NCBIfam" id="TIGR00407">
    <property type="entry name" value="proA"/>
    <property type="match status" value="1"/>
</dbReference>
<dbReference type="PANTHER" id="PTHR11063:SF8">
    <property type="entry name" value="DELTA-1-PYRROLINE-5-CARBOXYLATE SYNTHASE"/>
    <property type="match status" value="1"/>
</dbReference>
<dbReference type="PANTHER" id="PTHR11063">
    <property type="entry name" value="GLUTAMATE SEMIALDEHYDE DEHYDROGENASE"/>
    <property type="match status" value="1"/>
</dbReference>
<dbReference type="Pfam" id="PF00171">
    <property type="entry name" value="Aldedh"/>
    <property type="match status" value="1"/>
</dbReference>
<dbReference type="PIRSF" id="PIRSF000151">
    <property type="entry name" value="GPR"/>
    <property type="match status" value="1"/>
</dbReference>
<dbReference type="SUPFAM" id="SSF53720">
    <property type="entry name" value="ALDH-like"/>
    <property type="match status" value="1"/>
</dbReference>
<dbReference type="PROSITE" id="PS01223">
    <property type="entry name" value="PROA"/>
    <property type="match status" value="1"/>
</dbReference>
<organism>
    <name type="scientific">Synechococcus sp. (strain JA-3-3Ab)</name>
    <name type="common">Cyanobacteria bacterium Yellowstone A-Prime</name>
    <dbReference type="NCBI Taxonomy" id="321327"/>
    <lineage>
        <taxon>Bacteria</taxon>
        <taxon>Bacillati</taxon>
        <taxon>Cyanobacteriota</taxon>
        <taxon>Cyanophyceae</taxon>
        <taxon>Synechococcales</taxon>
        <taxon>Synechococcaceae</taxon>
        <taxon>Synechococcus</taxon>
    </lineage>
</organism>
<sequence>MSLVTDSPSLPEAAADSPLLAQVQLARAAARCTATLPTAIKNAALEAMATALLEHQEAILAANQADLEQAAEQVKAGELSASAYARLKLDAQKLADAVAGVRQVLRLPDPVGQALLIRELDEGLVLERRTYPLGVLGVIFESRPDALVQIAALAVKTGNSVLLKGGSEGLCSCQALMAAIQAGLQQIPEFPQGSLQLLTSRAEVKALLQLEGLVDLIIPRGSSSFVRYIMENTRIPVLGHADGLCHLYVDRAADVDMAVRLTLDSKTQYPAACNAIETLLVHAEIAPRFLPLAVQALREKGVELRGDPRCRQLVPDLIPATEDDWSTEYADLILSIKVVGSLDEAIAHIERYGSRHTEAIVTEDAAAAQRFLDEVDAAGVFHNASTRFADGFRYGLGAEVGISTQKLPPRGPVGLEGLVTYRYQLRGRGHLVADYTGPQARPFQHRDRLNTTGLS</sequence>